<feature type="chain" id="PRO_0000196789" description="Uncharacterized mitochondrial protein AtMg00750">
    <location>
        <begin position="1"/>
        <end position="119"/>
    </location>
</feature>
<sequence length="119" mass="13871">MHFKRGSEGHSLPLPCMHRSMQDISQHLKQWPRFVLQAGFYWPTTFKDAHGFVSSCDACQRKGNFTKRNEMPQHFILEVEVFDVWGIYFMKKTIFSWKPIHPNGGRLCLKMGGSSCEPH</sequence>
<dbReference type="EMBL" id="Y08501">
    <property type="protein sequence ID" value="CAA69820.1"/>
    <property type="molecule type" value="Genomic_DNA"/>
</dbReference>
<dbReference type="EMBL" id="BK010421">
    <property type="status" value="NOT_ANNOTATED_CDS"/>
    <property type="molecule type" value="Genomic_DNA"/>
</dbReference>
<dbReference type="EMBL" id="AC007143">
    <property type="status" value="NOT_ANNOTATED_CDS"/>
    <property type="molecule type" value="Genomic_DNA"/>
</dbReference>
<dbReference type="EMBL" id="CP002685">
    <property type="status" value="NOT_ANNOTATED_CDS"/>
    <property type="molecule type" value="Genomic_DNA"/>
</dbReference>
<dbReference type="RefSeq" id="NP_085534.1">
    <property type="nucleotide sequence ID" value="NC_001284.2"/>
</dbReference>
<dbReference type="STRING" id="3702.P92516"/>
<dbReference type="PaxDb" id="3702-ATMG00750.1"/>
<dbReference type="EnsemblPlants" id="ATMG00750.1">
    <property type="protein sequence ID" value="ATMG00750.1"/>
    <property type="gene ID" value="ATMG00750"/>
</dbReference>
<dbReference type="Gramene" id="ATMG00750.1">
    <property type="protein sequence ID" value="ATMG00750.1"/>
    <property type="gene ID" value="ATMG00750"/>
</dbReference>
<dbReference type="Araport" id="AT2G07686"/>
<dbReference type="Araport" id="ATMG00750"/>
<dbReference type="TAIR" id="AT2G07686"/>
<dbReference type="TAIR" id="ATMG00750">
    <property type="gene designation" value="ORF119"/>
</dbReference>
<dbReference type="eggNOG" id="KOG0017">
    <property type="taxonomic scope" value="Eukaryota"/>
</dbReference>
<dbReference type="HOGENOM" id="CLU_2064719_0_0_1"/>
<dbReference type="InParanoid" id="P92516"/>
<dbReference type="Proteomes" id="UP000006548">
    <property type="component" value="Chromosome 2"/>
</dbReference>
<dbReference type="Proteomes" id="UP000006548">
    <property type="component" value="Mitochondrion MT"/>
</dbReference>
<dbReference type="ExpressionAtlas" id="P92516">
    <property type="expression patterns" value="baseline and differential"/>
</dbReference>
<dbReference type="GO" id="GO:0005739">
    <property type="term" value="C:mitochondrion"/>
    <property type="evidence" value="ECO:0007669"/>
    <property type="project" value="UniProtKB-SubCell"/>
</dbReference>
<dbReference type="Gene3D" id="1.10.340.70">
    <property type="match status" value="1"/>
</dbReference>
<dbReference type="InterPro" id="IPR052160">
    <property type="entry name" value="Gypsy_RT_Integrase-like"/>
</dbReference>
<dbReference type="PANTHER" id="PTHR47266">
    <property type="entry name" value="ENDONUCLEASE-RELATED"/>
    <property type="match status" value="1"/>
</dbReference>
<organism>
    <name type="scientific">Arabidopsis thaliana</name>
    <name type="common">Mouse-ear cress</name>
    <dbReference type="NCBI Taxonomy" id="3702"/>
    <lineage>
        <taxon>Eukaryota</taxon>
        <taxon>Viridiplantae</taxon>
        <taxon>Streptophyta</taxon>
        <taxon>Embryophyta</taxon>
        <taxon>Tracheophyta</taxon>
        <taxon>Spermatophyta</taxon>
        <taxon>Magnoliopsida</taxon>
        <taxon>eudicotyledons</taxon>
        <taxon>Gunneridae</taxon>
        <taxon>Pentapetalae</taxon>
        <taxon>rosids</taxon>
        <taxon>malvids</taxon>
        <taxon>Brassicales</taxon>
        <taxon>Brassicaceae</taxon>
        <taxon>Camelineae</taxon>
        <taxon>Arabidopsis</taxon>
    </lineage>
</organism>
<reference key="1">
    <citation type="journal article" date="1997" name="Nat. Genet.">
        <title>The mitochondrial genome of Arabidopsis thaliana contains 57 genes in 366,924 nucleotides.</title>
        <authorList>
            <person name="Unseld M."/>
            <person name="Marienfeld J.R."/>
            <person name="Brandt P."/>
            <person name="Brennicke A."/>
        </authorList>
    </citation>
    <scope>NUCLEOTIDE SEQUENCE [LARGE SCALE GENOMIC DNA]</scope>
    <source>
        <strain>cv. C24</strain>
    </source>
</reference>
<reference key="2">
    <citation type="journal article" date="2018" name="Plant Cell">
        <title>Correction of persistent errors in Arabidopsis reference mitochondrial genomes.</title>
        <authorList>
            <person name="Sloan D.B."/>
            <person name="Wu Z."/>
            <person name="Sharbrough J."/>
        </authorList>
    </citation>
    <scope>NUCLEOTIDE SEQUENCE [LARGE SCALE GENOMIC DNA]</scope>
    <source>
        <strain>cv. Columbia</strain>
    </source>
</reference>
<reference key="3">
    <citation type="journal article" date="1999" name="Nature">
        <title>Sequence and analysis of chromosome 2 of the plant Arabidopsis thaliana.</title>
        <authorList>
            <person name="Lin X."/>
            <person name="Kaul S."/>
            <person name="Rounsley S.D."/>
            <person name="Shea T.P."/>
            <person name="Benito M.-I."/>
            <person name="Town C.D."/>
            <person name="Fujii C.Y."/>
            <person name="Mason T.M."/>
            <person name="Bowman C.L."/>
            <person name="Barnstead M.E."/>
            <person name="Feldblyum T.V."/>
            <person name="Buell C.R."/>
            <person name="Ketchum K.A."/>
            <person name="Lee J.J."/>
            <person name="Ronning C.M."/>
            <person name="Koo H.L."/>
            <person name="Moffat K.S."/>
            <person name="Cronin L.A."/>
            <person name="Shen M."/>
            <person name="Pai G."/>
            <person name="Van Aken S."/>
            <person name="Umayam L."/>
            <person name="Tallon L.J."/>
            <person name="Gill J.E."/>
            <person name="Adams M.D."/>
            <person name="Carrera A.J."/>
            <person name="Creasy T.H."/>
            <person name="Goodman H.M."/>
            <person name="Somerville C.R."/>
            <person name="Copenhaver G.P."/>
            <person name="Preuss D."/>
            <person name="Nierman W.C."/>
            <person name="White O."/>
            <person name="Eisen J.A."/>
            <person name="Salzberg S.L."/>
            <person name="Fraser C.M."/>
            <person name="Venter J.C."/>
        </authorList>
    </citation>
    <scope>NUCLEOTIDE SEQUENCE [LARGE SCALE GENOMIC DNA] (AT2G07686)</scope>
    <source>
        <strain>cv. Columbia</strain>
    </source>
</reference>
<reference key="4">
    <citation type="journal article" date="2017" name="Plant J.">
        <title>Araport11: a complete reannotation of the Arabidopsis thaliana reference genome.</title>
        <authorList>
            <person name="Cheng C.Y."/>
            <person name="Krishnakumar V."/>
            <person name="Chan A.P."/>
            <person name="Thibaud-Nissen F."/>
            <person name="Schobel S."/>
            <person name="Town C.D."/>
        </authorList>
    </citation>
    <scope>GENOME REANNOTATION (AT2G07686)</scope>
    <source>
        <strain>cv. Columbia</strain>
    </source>
</reference>
<keyword id="KW-0496">Mitochondrion</keyword>
<keyword id="KW-1185">Reference proteome</keyword>
<comment type="subcellular location">
    <subcellularLocation>
        <location evidence="1">Mitochondrion</location>
    </subcellularLocation>
</comment>
<comment type="miscellaneous">
    <text>A stretch of 270 kb of the mitochondrial genome is duplicated within the centromere of chromosome 2 resulting in the duplication of the gene. The expression of the duplicated gene (At2g07686) is not demonstrated.</text>
</comment>
<accession>P92516</accession>
<accession>Q1ZXZ7</accession>
<gene>
    <name evidence="3" type="ordered locus">AtMg00750</name>
</gene>
<gene>
    <name evidence="2" type="ordered locus">At2g07686</name>
</gene>
<geneLocation type="mitochondrion"/>
<protein>
    <recommendedName>
        <fullName>Uncharacterized mitochondrial protein AtMg00750</fullName>
    </recommendedName>
    <alternativeName>
        <fullName>ORF119</fullName>
    </alternativeName>
</protein>
<evidence type="ECO:0000305" key="1"/>
<evidence type="ECO:0000312" key="2">
    <source>
        <dbReference type="Araport" id="AT2G07686"/>
    </source>
</evidence>
<evidence type="ECO:0000312" key="3">
    <source>
        <dbReference type="Araport" id="ATMG00750"/>
    </source>
</evidence>
<proteinExistence type="predicted"/>
<name>M750_ARATH</name>